<protein>
    <recommendedName>
        <fullName evidence="1">Large ribosomal subunit protein uL15</fullName>
    </recommendedName>
    <alternativeName>
        <fullName evidence="3">50S ribosomal protein L15</fullName>
    </alternativeName>
</protein>
<accession>A9WH85</accession>
<gene>
    <name evidence="1" type="primary">rplO</name>
    <name type="ordered locus">Caur_2388</name>
</gene>
<dbReference type="EMBL" id="CP000909">
    <property type="protein sequence ID" value="ABY35597.1"/>
    <property type="molecule type" value="Genomic_DNA"/>
</dbReference>
<dbReference type="RefSeq" id="WP_012258250.1">
    <property type="nucleotide sequence ID" value="NC_010175.1"/>
</dbReference>
<dbReference type="RefSeq" id="YP_001635986.1">
    <property type="nucleotide sequence ID" value="NC_010175.1"/>
</dbReference>
<dbReference type="SMR" id="A9WH85"/>
<dbReference type="FunCoup" id="A9WH85">
    <property type="interactions" value="515"/>
</dbReference>
<dbReference type="STRING" id="324602.Caur_2388"/>
<dbReference type="EnsemblBacteria" id="ABY35597">
    <property type="protein sequence ID" value="ABY35597"/>
    <property type="gene ID" value="Caur_2388"/>
</dbReference>
<dbReference type="KEGG" id="cau:Caur_2388"/>
<dbReference type="PATRIC" id="fig|324602.8.peg.2702"/>
<dbReference type="eggNOG" id="COG0200">
    <property type="taxonomic scope" value="Bacteria"/>
</dbReference>
<dbReference type="HOGENOM" id="CLU_055188_4_2_0"/>
<dbReference type="InParanoid" id="A9WH85"/>
<dbReference type="Proteomes" id="UP000002008">
    <property type="component" value="Chromosome"/>
</dbReference>
<dbReference type="GO" id="GO:0022625">
    <property type="term" value="C:cytosolic large ribosomal subunit"/>
    <property type="evidence" value="ECO:0000318"/>
    <property type="project" value="GO_Central"/>
</dbReference>
<dbReference type="GO" id="GO:0019843">
    <property type="term" value="F:rRNA binding"/>
    <property type="evidence" value="ECO:0007669"/>
    <property type="project" value="UniProtKB-UniRule"/>
</dbReference>
<dbReference type="GO" id="GO:0003735">
    <property type="term" value="F:structural constituent of ribosome"/>
    <property type="evidence" value="ECO:0000318"/>
    <property type="project" value="GO_Central"/>
</dbReference>
<dbReference type="GO" id="GO:0006412">
    <property type="term" value="P:translation"/>
    <property type="evidence" value="ECO:0007669"/>
    <property type="project" value="UniProtKB-UniRule"/>
</dbReference>
<dbReference type="FunFam" id="3.100.10.10:FF:000005">
    <property type="entry name" value="50S ribosomal protein L15"/>
    <property type="match status" value="1"/>
</dbReference>
<dbReference type="Gene3D" id="3.100.10.10">
    <property type="match status" value="1"/>
</dbReference>
<dbReference type="HAMAP" id="MF_01341">
    <property type="entry name" value="Ribosomal_uL15"/>
    <property type="match status" value="1"/>
</dbReference>
<dbReference type="InterPro" id="IPR030878">
    <property type="entry name" value="Ribosomal_uL15"/>
</dbReference>
<dbReference type="InterPro" id="IPR021131">
    <property type="entry name" value="Ribosomal_uL15/eL18"/>
</dbReference>
<dbReference type="InterPro" id="IPR036227">
    <property type="entry name" value="Ribosomal_uL15/eL18_sf"/>
</dbReference>
<dbReference type="InterPro" id="IPR005749">
    <property type="entry name" value="Ribosomal_uL15_bac-type"/>
</dbReference>
<dbReference type="InterPro" id="IPR001196">
    <property type="entry name" value="Ribosomal_uL15_CS"/>
</dbReference>
<dbReference type="NCBIfam" id="TIGR01071">
    <property type="entry name" value="rplO_bact"/>
    <property type="match status" value="1"/>
</dbReference>
<dbReference type="PANTHER" id="PTHR12934">
    <property type="entry name" value="50S RIBOSOMAL PROTEIN L15"/>
    <property type="match status" value="1"/>
</dbReference>
<dbReference type="PANTHER" id="PTHR12934:SF11">
    <property type="entry name" value="LARGE RIBOSOMAL SUBUNIT PROTEIN UL15M"/>
    <property type="match status" value="1"/>
</dbReference>
<dbReference type="Pfam" id="PF00828">
    <property type="entry name" value="Ribosomal_L27A"/>
    <property type="match status" value="1"/>
</dbReference>
<dbReference type="SUPFAM" id="SSF52080">
    <property type="entry name" value="Ribosomal proteins L15p and L18e"/>
    <property type="match status" value="1"/>
</dbReference>
<dbReference type="PROSITE" id="PS00475">
    <property type="entry name" value="RIBOSOMAL_L15"/>
    <property type="match status" value="1"/>
</dbReference>
<name>RL15_CHLAA</name>
<reference key="1">
    <citation type="journal article" date="2011" name="BMC Genomics">
        <title>Complete genome sequence of the filamentous anoxygenic phototrophic bacterium Chloroflexus aurantiacus.</title>
        <authorList>
            <person name="Tang K.H."/>
            <person name="Barry K."/>
            <person name="Chertkov O."/>
            <person name="Dalin E."/>
            <person name="Han C.S."/>
            <person name="Hauser L.J."/>
            <person name="Honchak B.M."/>
            <person name="Karbach L.E."/>
            <person name="Land M.L."/>
            <person name="Lapidus A."/>
            <person name="Larimer F.W."/>
            <person name="Mikhailova N."/>
            <person name="Pitluck S."/>
            <person name="Pierson B.K."/>
            <person name="Blankenship R.E."/>
        </authorList>
    </citation>
    <scope>NUCLEOTIDE SEQUENCE [LARGE SCALE GENOMIC DNA]</scope>
    <source>
        <strain>ATCC 29366 / DSM 635 / J-10-fl</strain>
    </source>
</reference>
<proteinExistence type="inferred from homology"/>
<organism>
    <name type="scientific">Chloroflexus aurantiacus (strain ATCC 29366 / DSM 635 / J-10-fl)</name>
    <dbReference type="NCBI Taxonomy" id="324602"/>
    <lineage>
        <taxon>Bacteria</taxon>
        <taxon>Bacillati</taxon>
        <taxon>Chloroflexota</taxon>
        <taxon>Chloroflexia</taxon>
        <taxon>Chloroflexales</taxon>
        <taxon>Chloroflexineae</taxon>
        <taxon>Chloroflexaceae</taxon>
        <taxon>Chloroflexus</taxon>
    </lineage>
</organism>
<comment type="function">
    <text evidence="1">Binds to the 23S rRNA.</text>
</comment>
<comment type="subunit">
    <text evidence="1">Part of the 50S ribosomal subunit.</text>
</comment>
<comment type="similarity">
    <text evidence="1">Belongs to the universal ribosomal protein uL15 family.</text>
</comment>
<keyword id="KW-1185">Reference proteome</keyword>
<keyword id="KW-0687">Ribonucleoprotein</keyword>
<keyword id="KW-0689">Ribosomal protein</keyword>
<keyword id="KW-0694">RNA-binding</keyword>
<keyword id="KW-0699">rRNA-binding</keyword>
<sequence>MKLHDLRPAEGAHRKRKRIGRGHGSGKGKTGGKGMMGQKARSGPGPYRTFEGGQNRLVKRMPFKRGFVNKFRVEYEVVNVGSLVDWPVDLEVTPETLLARRLVRRKRMPVKILGDGELTQPLVIKAHKFSASARQKIEAAGGKAIDLTWVVERHSRSRGPNPSMRNARQS</sequence>
<feature type="chain" id="PRO_1000086704" description="Large ribosomal subunit protein uL15">
    <location>
        <begin position="1"/>
        <end position="170"/>
    </location>
</feature>
<feature type="region of interest" description="Disordered" evidence="2">
    <location>
        <begin position="1"/>
        <end position="52"/>
    </location>
</feature>
<feature type="compositionally biased region" description="Basic and acidic residues" evidence="2">
    <location>
        <begin position="1"/>
        <end position="12"/>
    </location>
</feature>
<feature type="compositionally biased region" description="Basic residues" evidence="2">
    <location>
        <begin position="13"/>
        <end position="26"/>
    </location>
</feature>
<evidence type="ECO:0000255" key="1">
    <source>
        <dbReference type="HAMAP-Rule" id="MF_01341"/>
    </source>
</evidence>
<evidence type="ECO:0000256" key="2">
    <source>
        <dbReference type="SAM" id="MobiDB-lite"/>
    </source>
</evidence>
<evidence type="ECO:0000305" key="3"/>